<evidence type="ECO:0000255" key="1"/>
<evidence type="ECO:0000305" key="2"/>
<name>Y1720_ARATH</name>
<keyword id="KW-0328">Glycosyltransferase</keyword>
<keyword id="KW-0472">Membrane</keyword>
<keyword id="KW-1185">Reference proteome</keyword>
<keyword id="KW-0808">Transferase</keyword>
<keyword id="KW-0812">Transmembrane</keyword>
<keyword id="KW-1133">Transmembrane helix</keyword>
<reference key="1">
    <citation type="journal article" date="2000" name="Nature">
        <title>Sequence and analysis of chromosome 1 of the plant Arabidopsis thaliana.</title>
        <authorList>
            <person name="Theologis A."/>
            <person name="Ecker J.R."/>
            <person name="Palm C.J."/>
            <person name="Federspiel N.A."/>
            <person name="Kaul S."/>
            <person name="White O."/>
            <person name="Alonso J."/>
            <person name="Altafi H."/>
            <person name="Araujo R."/>
            <person name="Bowman C.L."/>
            <person name="Brooks S.Y."/>
            <person name="Buehler E."/>
            <person name="Chan A."/>
            <person name="Chao Q."/>
            <person name="Chen H."/>
            <person name="Cheuk R.F."/>
            <person name="Chin C.W."/>
            <person name="Chung M.K."/>
            <person name="Conn L."/>
            <person name="Conway A.B."/>
            <person name="Conway A.R."/>
            <person name="Creasy T.H."/>
            <person name="Dewar K."/>
            <person name="Dunn P."/>
            <person name="Etgu P."/>
            <person name="Feldblyum T.V."/>
            <person name="Feng J.-D."/>
            <person name="Fong B."/>
            <person name="Fujii C.Y."/>
            <person name="Gill J.E."/>
            <person name="Goldsmith A.D."/>
            <person name="Haas B."/>
            <person name="Hansen N.F."/>
            <person name="Hughes B."/>
            <person name="Huizar L."/>
            <person name="Hunter J.L."/>
            <person name="Jenkins J."/>
            <person name="Johnson-Hopson C."/>
            <person name="Khan S."/>
            <person name="Khaykin E."/>
            <person name="Kim C.J."/>
            <person name="Koo H.L."/>
            <person name="Kremenetskaia I."/>
            <person name="Kurtz D.B."/>
            <person name="Kwan A."/>
            <person name="Lam B."/>
            <person name="Langin-Hooper S."/>
            <person name="Lee A."/>
            <person name="Lee J.M."/>
            <person name="Lenz C.A."/>
            <person name="Li J.H."/>
            <person name="Li Y.-P."/>
            <person name="Lin X."/>
            <person name="Liu S.X."/>
            <person name="Liu Z.A."/>
            <person name="Luros J.S."/>
            <person name="Maiti R."/>
            <person name="Marziali A."/>
            <person name="Militscher J."/>
            <person name="Miranda M."/>
            <person name="Nguyen M."/>
            <person name="Nierman W.C."/>
            <person name="Osborne B.I."/>
            <person name="Pai G."/>
            <person name="Peterson J."/>
            <person name="Pham P.K."/>
            <person name="Rizzo M."/>
            <person name="Rooney T."/>
            <person name="Rowley D."/>
            <person name="Sakano H."/>
            <person name="Salzberg S.L."/>
            <person name="Schwartz J.R."/>
            <person name="Shinn P."/>
            <person name="Southwick A.M."/>
            <person name="Sun H."/>
            <person name="Tallon L.J."/>
            <person name="Tambunga G."/>
            <person name="Toriumi M.J."/>
            <person name="Town C.D."/>
            <person name="Utterback T."/>
            <person name="Van Aken S."/>
            <person name="Vaysberg M."/>
            <person name="Vysotskaia V.S."/>
            <person name="Walker M."/>
            <person name="Wu D."/>
            <person name="Yu G."/>
            <person name="Fraser C.M."/>
            <person name="Venter J.C."/>
            <person name="Davis R.W."/>
        </authorList>
    </citation>
    <scope>NUCLEOTIDE SEQUENCE [LARGE SCALE GENOMIC DNA]</scope>
    <source>
        <strain>cv. Columbia</strain>
    </source>
</reference>
<reference key="2">
    <citation type="journal article" date="2017" name="Plant J.">
        <title>Araport11: a complete reannotation of the Arabidopsis thaliana reference genome.</title>
        <authorList>
            <person name="Cheng C.Y."/>
            <person name="Krishnakumar V."/>
            <person name="Chan A.P."/>
            <person name="Thibaud-Nissen F."/>
            <person name="Schobel S."/>
            <person name="Town C.D."/>
        </authorList>
    </citation>
    <scope>GENOME REANNOTATION</scope>
    <source>
        <strain>cv. Columbia</strain>
    </source>
</reference>
<reference key="3">
    <citation type="journal article" date="2003" name="Science">
        <title>Empirical analysis of transcriptional activity in the Arabidopsis genome.</title>
        <authorList>
            <person name="Yamada K."/>
            <person name="Lim J."/>
            <person name="Dale J.M."/>
            <person name="Chen H."/>
            <person name="Shinn P."/>
            <person name="Palm C.J."/>
            <person name="Southwick A.M."/>
            <person name="Wu H.C."/>
            <person name="Kim C.J."/>
            <person name="Nguyen M."/>
            <person name="Pham P.K."/>
            <person name="Cheuk R.F."/>
            <person name="Karlin-Newmann G."/>
            <person name="Liu S.X."/>
            <person name="Lam B."/>
            <person name="Sakano H."/>
            <person name="Wu T."/>
            <person name="Yu G."/>
            <person name="Miranda M."/>
            <person name="Quach H.L."/>
            <person name="Tripp M."/>
            <person name="Chang C.H."/>
            <person name="Lee J.M."/>
            <person name="Toriumi M.J."/>
            <person name="Chan M.M."/>
            <person name="Tang C.C."/>
            <person name="Onodera C.S."/>
            <person name="Deng J.M."/>
            <person name="Akiyama K."/>
            <person name="Ansari Y."/>
            <person name="Arakawa T."/>
            <person name="Banh J."/>
            <person name="Banno F."/>
            <person name="Bowser L."/>
            <person name="Brooks S.Y."/>
            <person name="Carninci P."/>
            <person name="Chao Q."/>
            <person name="Choy N."/>
            <person name="Enju A."/>
            <person name="Goldsmith A.D."/>
            <person name="Gurjal M."/>
            <person name="Hansen N.F."/>
            <person name="Hayashizaki Y."/>
            <person name="Johnson-Hopson C."/>
            <person name="Hsuan V.W."/>
            <person name="Iida K."/>
            <person name="Karnes M."/>
            <person name="Khan S."/>
            <person name="Koesema E."/>
            <person name="Ishida J."/>
            <person name="Jiang P.X."/>
            <person name="Jones T."/>
            <person name="Kawai J."/>
            <person name="Kamiya A."/>
            <person name="Meyers C."/>
            <person name="Nakajima M."/>
            <person name="Narusaka M."/>
            <person name="Seki M."/>
            <person name="Sakurai T."/>
            <person name="Satou M."/>
            <person name="Tamse R."/>
            <person name="Vaysberg M."/>
            <person name="Wallender E.K."/>
            <person name="Wong C."/>
            <person name="Yamamura Y."/>
            <person name="Yuan S."/>
            <person name="Shinozaki K."/>
            <person name="Davis R.W."/>
            <person name="Theologis A."/>
            <person name="Ecker J.R."/>
        </authorList>
    </citation>
    <scope>NUCLEOTIDE SEQUENCE [LARGE SCALE MRNA]</scope>
    <source>
        <strain>cv. Columbia</strain>
    </source>
</reference>
<dbReference type="EC" id="2.4.1.-" evidence="2"/>
<dbReference type="EMBL" id="AC000348">
    <property type="protein sequence ID" value="AAF79871.1"/>
    <property type="molecule type" value="Genomic_DNA"/>
</dbReference>
<dbReference type="EMBL" id="CP002684">
    <property type="protein sequence ID" value="AEE30793.1"/>
    <property type="molecule type" value="Genomic_DNA"/>
</dbReference>
<dbReference type="EMBL" id="AF370145">
    <property type="protein sequence ID" value="AAK43960.1"/>
    <property type="molecule type" value="mRNA"/>
</dbReference>
<dbReference type="EMBL" id="AY150464">
    <property type="protein sequence ID" value="AAN12989.1"/>
    <property type="molecule type" value="mRNA"/>
</dbReference>
<dbReference type="PIR" id="C86398">
    <property type="entry name" value="C86398"/>
</dbReference>
<dbReference type="RefSeq" id="NP_564272.1">
    <property type="nucleotide sequence ID" value="NM_102482.4"/>
</dbReference>
<dbReference type="SMR" id="Q94K98"/>
<dbReference type="FunCoup" id="Q94K98">
    <property type="interactions" value="956"/>
</dbReference>
<dbReference type="IntAct" id="Q94K98">
    <property type="interactions" value="1"/>
</dbReference>
<dbReference type="STRING" id="3702.Q94K98"/>
<dbReference type="iPTMnet" id="Q94K98"/>
<dbReference type="PaxDb" id="3702-AT1G27200.1"/>
<dbReference type="ProteomicsDB" id="243098"/>
<dbReference type="EnsemblPlants" id="AT1G27200.1">
    <property type="protein sequence ID" value="AT1G27200.1"/>
    <property type="gene ID" value="AT1G27200"/>
</dbReference>
<dbReference type="GeneID" id="839609"/>
<dbReference type="Gramene" id="AT1G27200.1">
    <property type="protein sequence ID" value="AT1G27200.1"/>
    <property type="gene ID" value="AT1G27200"/>
</dbReference>
<dbReference type="KEGG" id="ath:AT1G27200"/>
<dbReference type="Araport" id="AT1G27200"/>
<dbReference type="TAIR" id="AT1G27200"/>
<dbReference type="eggNOG" id="ENOG502QVEP">
    <property type="taxonomic scope" value="Eukaryota"/>
</dbReference>
<dbReference type="HOGENOM" id="CLU_022851_0_0_1"/>
<dbReference type="InParanoid" id="Q94K98"/>
<dbReference type="OMA" id="NWRLQFC"/>
<dbReference type="OrthoDB" id="2526284at2759"/>
<dbReference type="PhylomeDB" id="Q94K98"/>
<dbReference type="PRO" id="PR:Q94K98"/>
<dbReference type="Proteomes" id="UP000006548">
    <property type="component" value="Chromosome 1"/>
</dbReference>
<dbReference type="ExpressionAtlas" id="Q94K98">
    <property type="expression patterns" value="baseline and differential"/>
</dbReference>
<dbReference type="GO" id="GO:0005794">
    <property type="term" value="C:Golgi apparatus"/>
    <property type="evidence" value="ECO:0000314"/>
    <property type="project" value="TAIR"/>
</dbReference>
<dbReference type="GO" id="GO:0000138">
    <property type="term" value="C:Golgi trans cisterna"/>
    <property type="evidence" value="ECO:0007005"/>
    <property type="project" value="TAIR"/>
</dbReference>
<dbReference type="GO" id="GO:0016020">
    <property type="term" value="C:membrane"/>
    <property type="evidence" value="ECO:0007669"/>
    <property type="project" value="UniProtKB-SubCell"/>
</dbReference>
<dbReference type="GO" id="GO:0016757">
    <property type="term" value="F:glycosyltransferase activity"/>
    <property type="evidence" value="ECO:0007669"/>
    <property type="project" value="UniProtKB-KW"/>
</dbReference>
<dbReference type="InterPro" id="IPR008166">
    <property type="entry name" value="Glyco_transf_92"/>
</dbReference>
<dbReference type="PANTHER" id="PTHR21461">
    <property type="entry name" value="GLYCOSYLTRANSFERASE FAMILY 92 PROTEIN"/>
    <property type="match status" value="1"/>
</dbReference>
<dbReference type="PANTHER" id="PTHR21461:SF16">
    <property type="entry name" value="GLYCOSYLTRANSFERASE FAMILY 92 PROTEIN RCOM_0530710"/>
    <property type="match status" value="1"/>
</dbReference>
<dbReference type="Pfam" id="PF01697">
    <property type="entry name" value="Glyco_transf_92"/>
    <property type="match status" value="1"/>
</dbReference>
<sequence>MTEYENGKKRKVRNKQQVKVQFLSQRYLILCFCCFFVLLFFLSSDRISTLSVRSDSLRPSLRVPTLSVLSSSMDSFHRGRFPPLSVEDRVQFPDHLLLILSHGIGKGEKNLVCVYRGVKEETLVLPSISSDEFDEFRSIVRCPNAPLNYSSSVDLQFRGDLVKKKMKKQSRRVHNWEKVGYEAVIDGDTVVVFVKGLTRRPHKESDPSYYKCQFEIENSEEKEVTQAIAAAQEVVRCGLPESLKLNPEMMFRVSVIHIDPRGRTTPALPSVARIYGSDSIEKKEKKSGVKHELCVCTMLWNQAPFLREWIMYHSWLGVERWFIYDNNSDDGIQEEIELLSSENYNVSRHVWPWIKTQEAGFSHCAVRAKEECNWVGFFDVDEFYYFPTHRSQGLPSKNALKSLVSNYTSWDLVGEIRTDCHSYGPSGLTSVPSQGVTVGYTCRQANPERHKSIIRPELLTSSLLNEVHHFQLKEGVGHMSLVESVAVVNHYKYQVWDTFKAKFYRRVATYVVDWQENQNQGSKDRAPGLGTEAIEPPDWKRRFCEVWDTGLKDLVMSNFADQVTGYLPWQRQQQE</sequence>
<protein>
    <recommendedName>
        <fullName>Glycosyltransferase family 92 protein At1g27200</fullName>
        <ecNumber evidence="2">2.4.1.-</ecNumber>
    </recommendedName>
</protein>
<comment type="subcellular location">
    <subcellularLocation>
        <location evidence="2">Membrane</location>
        <topology evidence="2">Single-pass membrane protein</topology>
    </subcellularLocation>
</comment>
<comment type="similarity">
    <text evidence="2">Belongs to the glycosyltransferase 92 family.</text>
</comment>
<organism>
    <name type="scientific">Arabidopsis thaliana</name>
    <name type="common">Mouse-ear cress</name>
    <dbReference type="NCBI Taxonomy" id="3702"/>
    <lineage>
        <taxon>Eukaryota</taxon>
        <taxon>Viridiplantae</taxon>
        <taxon>Streptophyta</taxon>
        <taxon>Embryophyta</taxon>
        <taxon>Tracheophyta</taxon>
        <taxon>Spermatophyta</taxon>
        <taxon>Magnoliopsida</taxon>
        <taxon>eudicotyledons</taxon>
        <taxon>Gunneridae</taxon>
        <taxon>Pentapetalae</taxon>
        <taxon>rosids</taxon>
        <taxon>malvids</taxon>
        <taxon>Brassicales</taxon>
        <taxon>Brassicaceae</taxon>
        <taxon>Camelineae</taxon>
        <taxon>Arabidopsis</taxon>
    </lineage>
</organism>
<accession>Q94K98</accession>
<accession>O04568</accession>
<gene>
    <name type="ordered locus">At1g27200</name>
    <name type="ORF">T7N9.26</name>
</gene>
<feature type="chain" id="PRO_0000405579" description="Glycosyltransferase family 92 protein At1g27200">
    <location>
        <begin position="1"/>
        <end position="575"/>
    </location>
</feature>
<feature type="transmembrane region" description="Helical" evidence="1">
    <location>
        <begin position="22"/>
        <end position="44"/>
    </location>
</feature>
<feature type="domain" description="GT92">
    <location>
        <begin position="293"/>
        <end position="540"/>
    </location>
</feature>
<feature type="sequence conflict" description="In Ref. 3; AAK43960." evidence="2" ref="3">
    <original>E</original>
    <variation>G</variation>
    <location>
        <position position="177"/>
    </location>
</feature>
<proteinExistence type="evidence at transcript level"/>